<comment type="function">
    <text evidence="1">Probable ion channel inhibitor.</text>
</comment>
<comment type="subcellular location">
    <subcellularLocation>
        <location evidence="1">Secreted</location>
    </subcellularLocation>
</comment>
<comment type="tissue specificity">
    <text>Expressed by the venom gland.</text>
</comment>
<comment type="domain">
    <text evidence="1">The presence of a 'disulfide through disulfide knot' structurally defines this protein as a knottin.</text>
</comment>
<comment type="similarity">
    <text evidence="4">Belongs to the neurotoxin 14 (magi-1) family. 01 (HNTX-16) subfamily.</text>
</comment>
<accession>D2Y286</accession>
<name>H16P1_CYRHA</name>
<reference key="1">
    <citation type="journal article" date="2010" name="J. Proteome Res.">
        <title>Molecular diversification of peptide toxins from the tarantula Haplopelma hainanum (Ornithoctonus hainana) venom based on transcriptomic, peptidomic, and genomic analyses.</title>
        <authorList>
            <person name="Tang X."/>
            <person name="Zhang Y."/>
            <person name="Hu W."/>
            <person name="Xu D."/>
            <person name="Tao H."/>
            <person name="Yang X."/>
            <person name="Li Y."/>
            <person name="Jiang L."/>
            <person name="Liang S."/>
        </authorList>
    </citation>
    <scope>NUCLEOTIDE SEQUENCE [LARGE SCALE MRNA]</scope>
    <source>
        <tissue>Venom gland</tissue>
    </source>
</reference>
<sequence>MNTVRVTFLLVFVLAVSLGQADKDENRMEMQEKTEQGKSYLDFAENLLLQKLEELEAKLLEEDSEESRNSRQKRCIGEGVPCDENDPRCCSGLVCLKPALHGIWYKSYYCYKK</sequence>
<organism>
    <name type="scientific">Cyriopagopus hainanus</name>
    <name type="common">Chinese bird spider</name>
    <name type="synonym">Haplopelma hainanum</name>
    <dbReference type="NCBI Taxonomy" id="209901"/>
    <lineage>
        <taxon>Eukaryota</taxon>
        <taxon>Metazoa</taxon>
        <taxon>Ecdysozoa</taxon>
        <taxon>Arthropoda</taxon>
        <taxon>Chelicerata</taxon>
        <taxon>Arachnida</taxon>
        <taxon>Araneae</taxon>
        <taxon>Mygalomorphae</taxon>
        <taxon>Theraphosidae</taxon>
        <taxon>Haplopelma</taxon>
    </lineage>
</organism>
<dbReference type="EMBL" id="GU292963">
    <property type="protein sequence ID" value="ADB56779.1"/>
    <property type="molecule type" value="mRNA"/>
</dbReference>
<dbReference type="ArachnoServer" id="AS001551">
    <property type="toxin name" value="U11-theraphotoxin-Hhn1p"/>
</dbReference>
<dbReference type="GO" id="GO:0005576">
    <property type="term" value="C:extracellular region"/>
    <property type="evidence" value="ECO:0007669"/>
    <property type="project" value="UniProtKB-SubCell"/>
</dbReference>
<dbReference type="GO" id="GO:0019871">
    <property type="term" value="F:sodium channel inhibitor activity"/>
    <property type="evidence" value="ECO:0007669"/>
    <property type="project" value="InterPro"/>
</dbReference>
<dbReference type="GO" id="GO:0090729">
    <property type="term" value="F:toxin activity"/>
    <property type="evidence" value="ECO:0007669"/>
    <property type="project" value="UniProtKB-KW"/>
</dbReference>
<dbReference type="InterPro" id="IPR012627">
    <property type="entry name" value="Toxin_22"/>
</dbReference>
<dbReference type="Pfam" id="PF08092">
    <property type="entry name" value="Toxin_22"/>
    <property type="match status" value="1"/>
</dbReference>
<proteinExistence type="evidence at transcript level"/>
<feature type="signal peptide" evidence="2">
    <location>
        <begin position="1"/>
        <end position="21"/>
    </location>
</feature>
<feature type="propeptide" id="PRO_0000400947" evidence="1">
    <location>
        <begin position="22"/>
        <end position="74"/>
    </location>
</feature>
<feature type="peptide" id="PRO_0000400948" description="U11-theraphotoxin-Hhn1p">
    <location>
        <begin position="75"/>
        <end position="113"/>
    </location>
</feature>
<feature type="region of interest" description="Disordered" evidence="3">
    <location>
        <begin position="61"/>
        <end position="83"/>
    </location>
</feature>
<feature type="disulfide bond" evidence="1">
    <location>
        <begin position="75"/>
        <end position="90"/>
    </location>
</feature>
<feature type="disulfide bond" evidence="1">
    <location>
        <begin position="82"/>
        <end position="95"/>
    </location>
</feature>
<feature type="disulfide bond" evidence="1">
    <location>
        <begin position="89"/>
        <end position="110"/>
    </location>
</feature>
<evidence type="ECO:0000250" key="1"/>
<evidence type="ECO:0000255" key="2"/>
<evidence type="ECO:0000256" key="3">
    <source>
        <dbReference type="SAM" id="MobiDB-lite"/>
    </source>
</evidence>
<evidence type="ECO:0000305" key="4"/>
<protein>
    <recommendedName>
        <fullName>U11-theraphotoxin-Hhn1p</fullName>
        <shortName>U11-TRTX-Hhn1p</shortName>
    </recommendedName>
    <alternativeName>
        <fullName>Hainantoxin-XVI-16</fullName>
        <shortName>HNTX-XVI-16</shortName>
    </alternativeName>
</protein>
<keyword id="KW-1015">Disulfide bond</keyword>
<keyword id="KW-0872">Ion channel impairing toxin</keyword>
<keyword id="KW-0960">Knottin</keyword>
<keyword id="KW-0964">Secreted</keyword>
<keyword id="KW-0732">Signal</keyword>
<keyword id="KW-0800">Toxin</keyword>